<sequence>MKASIISKLESLKERHEELEALLGEPSVINDQDKFRAYSKEYAQLEDVVKCFARWNWLNNNIEETQLLLDDPDMKEMAELEIEESKAEIENAEQQLQILLLPKDPNDEYNAYLEIRAGTGGDEAGIFAGDLFRMYSRYAESKRWRVEVLNANESEQGGYKEIIVKVNGEGVYGQLKFESGGHRVQRVPKTESQGRIHTSACTVAVMPELPENEMPEINPSDLRIDTYRSSGAGGQHVNTTDSAVRITHIPTGIVVECQDERSQHKNKAKALSVLASRIAQAEQERQAQAQADTRRNLLGSGDRSDKIRTYNYPQGRVTDHRINLTVYRLDEVMNGKIDELIQPIITEYQADQLAMLSEQN</sequence>
<name>RF1_HISS1</name>
<keyword id="KW-0963">Cytoplasm</keyword>
<keyword id="KW-0488">Methylation</keyword>
<keyword id="KW-0648">Protein biosynthesis</keyword>
<accession>Q0I3B5</accession>
<feature type="chain" id="PRO_0000263283" description="Peptide chain release factor 1">
    <location>
        <begin position="1"/>
        <end position="360"/>
    </location>
</feature>
<feature type="region of interest" description="Disordered" evidence="2">
    <location>
        <begin position="284"/>
        <end position="312"/>
    </location>
</feature>
<feature type="modified residue" description="N5-methylglutamine" evidence="1">
    <location>
        <position position="235"/>
    </location>
</feature>
<protein>
    <recommendedName>
        <fullName evidence="1">Peptide chain release factor 1</fullName>
        <shortName evidence="1">RF-1</shortName>
    </recommendedName>
</protein>
<reference key="1">
    <citation type="journal article" date="2007" name="J. Bacteriol.">
        <title>Complete genome sequence of Haemophilus somnus (Histophilus somni) strain 129Pt and comparison to Haemophilus ducreyi 35000HP and Haemophilus influenzae Rd.</title>
        <authorList>
            <person name="Challacombe J.F."/>
            <person name="Duncan A.J."/>
            <person name="Brettin T.S."/>
            <person name="Bruce D."/>
            <person name="Chertkov O."/>
            <person name="Detter J.C."/>
            <person name="Han C.S."/>
            <person name="Misra M."/>
            <person name="Richardson P."/>
            <person name="Tapia R."/>
            <person name="Thayer N."/>
            <person name="Xie G."/>
            <person name="Inzana T.J."/>
        </authorList>
    </citation>
    <scope>NUCLEOTIDE SEQUENCE [LARGE SCALE GENOMIC DNA]</scope>
    <source>
        <strain>129Pt</strain>
    </source>
</reference>
<organism>
    <name type="scientific">Histophilus somni (strain 129Pt)</name>
    <name type="common">Haemophilus somnus</name>
    <dbReference type="NCBI Taxonomy" id="205914"/>
    <lineage>
        <taxon>Bacteria</taxon>
        <taxon>Pseudomonadati</taxon>
        <taxon>Pseudomonadota</taxon>
        <taxon>Gammaproteobacteria</taxon>
        <taxon>Pasteurellales</taxon>
        <taxon>Pasteurellaceae</taxon>
        <taxon>Histophilus</taxon>
    </lineage>
</organism>
<dbReference type="EMBL" id="CP000436">
    <property type="protein sequence ID" value="ABI25225.1"/>
    <property type="molecule type" value="Genomic_DNA"/>
</dbReference>
<dbReference type="SMR" id="Q0I3B5"/>
<dbReference type="KEGG" id="hso:HS_0950"/>
<dbReference type="eggNOG" id="COG0216">
    <property type="taxonomic scope" value="Bacteria"/>
</dbReference>
<dbReference type="HOGENOM" id="CLU_036856_0_1_6"/>
<dbReference type="GO" id="GO:0005737">
    <property type="term" value="C:cytoplasm"/>
    <property type="evidence" value="ECO:0007669"/>
    <property type="project" value="UniProtKB-SubCell"/>
</dbReference>
<dbReference type="GO" id="GO:0016149">
    <property type="term" value="F:translation release factor activity, codon specific"/>
    <property type="evidence" value="ECO:0007669"/>
    <property type="project" value="UniProtKB-UniRule"/>
</dbReference>
<dbReference type="FunFam" id="3.30.160.20:FF:000004">
    <property type="entry name" value="Peptide chain release factor 1"/>
    <property type="match status" value="1"/>
</dbReference>
<dbReference type="FunFam" id="3.30.70.1660:FF:000002">
    <property type="entry name" value="Peptide chain release factor 1"/>
    <property type="match status" value="1"/>
</dbReference>
<dbReference type="FunFam" id="3.30.70.1660:FF:000004">
    <property type="entry name" value="Peptide chain release factor 1"/>
    <property type="match status" value="1"/>
</dbReference>
<dbReference type="Gene3D" id="3.30.160.20">
    <property type="match status" value="1"/>
</dbReference>
<dbReference type="Gene3D" id="3.30.70.1660">
    <property type="match status" value="1"/>
</dbReference>
<dbReference type="Gene3D" id="6.10.140.1950">
    <property type="match status" value="1"/>
</dbReference>
<dbReference type="HAMAP" id="MF_00093">
    <property type="entry name" value="Rel_fac_1"/>
    <property type="match status" value="1"/>
</dbReference>
<dbReference type="InterPro" id="IPR005139">
    <property type="entry name" value="PCRF"/>
</dbReference>
<dbReference type="InterPro" id="IPR000352">
    <property type="entry name" value="Pep_chain_release_fac_I"/>
</dbReference>
<dbReference type="InterPro" id="IPR045853">
    <property type="entry name" value="Pep_chain_release_fac_I_sf"/>
</dbReference>
<dbReference type="InterPro" id="IPR050057">
    <property type="entry name" value="Prokaryotic/Mito_RF"/>
</dbReference>
<dbReference type="InterPro" id="IPR004373">
    <property type="entry name" value="RF-1"/>
</dbReference>
<dbReference type="NCBIfam" id="TIGR00019">
    <property type="entry name" value="prfA"/>
    <property type="match status" value="1"/>
</dbReference>
<dbReference type="NCBIfam" id="NF001859">
    <property type="entry name" value="PRK00591.1"/>
    <property type="match status" value="1"/>
</dbReference>
<dbReference type="PANTHER" id="PTHR43804">
    <property type="entry name" value="LD18447P"/>
    <property type="match status" value="1"/>
</dbReference>
<dbReference type="PANTHER" id="PTHR43804:SF7">
    <property type="entry name" value="LD18447P"/>
    <property type="match status" value="1"/>
</dbReference>
<dbReference type="Pfam" id="PF03462">
    <property type="entry name" value="PCRF"/>
    <property type="match status" value="1"/>
</dbReference>
<dbReference type="Pfam" id="PF00472">
    <property type="entry name" value="RF-1"/>
    <property type="match status" value="1"/>
</dbReference>
<dbReference type="SMART" id="SM00937">
    <property type="entry name" value="PCRF"/>
    <property type="match status" value="1"/>
</dbReference>
<dbReference type="SUPFAM" id="SSF75620">
    <property type="entry name" value="Release factor"/>
    <property type="match status" value="1"/>
</dbReference>
<dbReference type="PROSITE" id="PS00745">
    <property type="entry name" value="RF_PROK_I"/>
    <property type="match status" value="1"/>
</dbReference>
<gene>
    <name evidence="1" type="primary">prfA</name>
    <name type="ordered locus">HS_0950</name>
</gene>
<evidence type="ECO:0000255" key="1">
    <source>
        <dbReference type="HAMAP-Rule" id="MF_00093"/>
    </source>
</evidence>
<evidence type="ECO:0000256" key="2">
    <source>
        <dbReference type="SAM" id="MobiDB-lite"/>
    </source>
</evidence>
<proteinExistence type="inferred from homology"/>
<comment type="function">
    <text evidence="1">Peptide chain release factor 1 directs the termination of translation in response to the peptide chain termination codons UAG and UAA.</text>
</comment>
<comment type="subcellular location">
    <subcellularLocation>
        <location evidence="1">Cytoplasm</location>
    </subcellularLocation>
</comment>
<comment type="PTM">
    <text evidence="1">Methylated by PrmC. Methylation increases the termination efficiency of RF1.</text>
</comment>
<comment type="similarity">
    <text evidence="1">Belongs to the prokaryotic/mitochondrial release factor family.</text>
</comment>